<evidence type="ECO:0000255" key="1">
    <source>
        <dbReference type="HAMAP-Rule" id="MF_00270"/>
    </source>
</evidence>
<evidence type="ECO:0000256" key="2">
    <source>
        <dbReference type="SAM" id="MobiDB-lite"/>
    </source>
</evidence>
<evidence type="ECO:0000305" key="3"/>
<dbReference type="EMBL" id="EU189132">
    <property type="protein sequence ID" value="ABW83714.1"/>
    <property type="molecule type" value="Genomic_DNA"/>
</dbReference>
<dbReference type="RefSeq" id="YP_001542550.1">
    <property type="nucleotide sequence ID" value="NC_009963.1"/>
</dbReference>
<dbReference type="SMR" id="A8W3E3"/>
<dbReference type="GeneID" id="5729659"/>
<dbReference type="GO" id="GO:0005763">
    <property type="term" value="C:mitochondrial small ribosomal subunit"/>
    <property type="evidence" value="ECO:0007669"/>
    <property type="project" value="TreeGrafter"/>
</dbReference>
<dbReference type="GO" id="GO:0009536">
    <property type="term" value="C:plastid"/>
    <property type="evidence" value="ECO:0007669"/>
    <property type="project" value="UniProtKB-SubCell"/>
</dbReference>
<dbReference type="GO" id="GO:0070181">
    <property type="term" value="F:small ribosomal subunit rRNA binding"/>
    <property type="evidence" value="ECO:0007669"/>
    <property type="project" value="TreeGrafter"/>
</dbReference>
<dbReference type="GO" id="GO:0003735">
    <property type="term" value="F:structural constituent of ribosome"/>
    <property type="evidence" value="ECO:0007669"/>
    <property type="project" value="InterPro"/>
</dbReference>
<dbReference type="GO" id="GO:0006412">
    <property type="term" value="P:translation"/>
    <property type="evidence" value="ECO:0007669"/>
    <property type="project" value="InterPro"/>
</dbReference>
<dbReference type="FunFam" id="4.10.640.10:FF:000002">
    <property type="entry name" value="30S ribosomal protein S18, chloroplastic"/>
    <property type="match status" value="1"/>
</dbReference>
<dbReference type="Gene3D" id="4.10.640.10">
    <property type="entry name" value="Ribosomal protein S18"/>
    <property type="match status" value="1"/>
</dbReference>
<dbReference type="HAMAP" id="MF_00270">
    <property type="entry name" value="Ribosomal_bS18"/>
    <property type="match status" value="1"/>
</dbReference>
<dbReference type="InterPro" id="IPR001648">
    <property type="entry name" value="Ribosomal_bS18"/>
</dbReference>
<dbReference type="InterPro" id="IPR018275">
    <property type="entry name" value="Ribosomal_bS18_CS"/>
</dbReference>
<dbReference type="InterPro" id="IPR036870">
    <property type="entry name" value="Ribosomal_bS18_sf"/>
</dbReference>
<dbReference type="NCBIfam" id="TIGR00165">
    <property type="entry name" value="S18"/>
    <property type="match status" value="1"/>
</dbReference>
<dbReference type="PANTHER" id="PTHR13479">
    <property type="entry name" value="30S RIBOSOMAL PROTEIN S18"/>
    <property type="match status" value="1"/>
</dbReference>
<dbReference type="PANTHER" id="PTHR13479:SF40">
    <property type="entry name" value="SMALL RIBOSOMAL SUBUNIT PROTEIN BS18M"/>
    <property type="match status" value="1"/>
</dbReference>
<dbReference type="Pfam" id="PF01084">
    <property type="entry name" value="Ribosomal_S18"/>
    <property type="match status" value="1"/>
</dbReference>
<dbReference type="PRINTS" id="PR00974">
    <property type="entry name" value="RIBOSOMALS18"/>
</dbReference>
<dbReference type="SUPFAM" id="SSF46911">
    <property type="entry name" value="Ribosomal protein S18"/>
    <property type="match status" value="1"/>
</dbReference>
<dbReference type="PROSITE" id="PS00057">
    <property type="entry name" value="RIBOSOMAL_S18"/>
    <property type="match status" value="1"/>
</dbReference>
<protein>
    <recommendedName>
        <fullName evidence="3">Small ribosomal subunit protein bS18c</fullName>
    </recommendedName>
    <alternativeName>
        <fullName>Plastid 30S ribosomal protein S18</fullName>
    </alternativeName>
</protein>
<gene>
    <name evidence="1" type="primary">rps18</name>
</gene>
<organism>
    <name type="scientific">Cuscuta exaltata</name>
    <name type="common">Tall dodder</name>
    <dbReference type="NCBI Taxonomy" id="476139"/>
    <lineage>
        <taxon>Eukaryota</taxon>
        <taxon>Viridiplantae</taxon>
        <taxon>Streptophyta</taxon>
        <taxon>Embryophyta</taxon>
        <taxon>Tracheophyta</taxon>
        <taxon>Spermatophyta</taxon>
        <taxon>Magnoliopsida</taxon>
        <taxon>eudicotyledons</taxon>
        <taxon>Gunneridae</taxon>
        <taxon>Pentapetalae</taxon>
        <taxon>asterids</taxon>
        <taxon>lamiids</taxon>
        <taxon>Solanales</taxon>
        <taxon>Convolvulaceae</taxon>
        <taxon>Cuscuteae</taxon>
        <taxon>Cuscuta</taxon>
        <taxon>Cuscuta subgen. Monogynella</taxon>
    </lineage>
</organism>
<name>RR18_CUSEX</name>
<keyword id="KW-0934">Plastid</keyword>
<keyword id="KW-0687">Ribonucleoprotein</keyword>
<keyword id="KW-0689">Ribosomal protein</keyword>
<keyword id="KW-0694">RNA-binding</keyword>
<keyword id="KW-0699">rRNA-binding</keyword>
<feature type="chain" id="PRO_0000345578" description="Small ribosomal subunit protein bS18c">
    <location>
        <begin position="1"/>
        <end position="117"/>
    </location>
</feature>
<feature type="region of interest" description="Disordered" evidence="2">
    <location>
        <begin position="86"/>
        <end position="117"/>
    </location>
</feature>
<proteinExistence type="inferred from homology"/>
<sequence>MDKSKRPFIKSKRSFRRRLPPIKSGDRIDYRNISLISRFLSEQGKILSKRVNRFTLKQQRLITLAIKQARILSLLPFTKRKGFERSELTPRTNALKARNKNKQNKYQNNQTKFLSNF</sequence>
<comment type="subunit">
    <text evidence="1">Part of the 30S ribosomal subunit.</text>
</comment>
<comment type="subcellular location">
    <subcellularLocation>
        <location>Plastid</location>
    </subcellularLocation>
</comment>
<comment type="similarity">
    <text evidence="1">Belongs to the bacterial ribosomal protein bS18 family.</text>
</comment>
<reference key="1">
    <citation type="journal article" date="2007" name="BMC Plant Biol.">
        <title>Complete plastid genome sequences suggest strong selection for retention of photosynthetic genes in the parasitic plant genus Cuscuta.</title>
        <authorList>
            <person name="McNeal J.R."/>
            <person name="Kuehl J.V."/>
            <person name="Boore J.L."/>
            <person name="dePamphilis C.W."/>
        </authorList>
    </citation>
    <scope>NUCLEOTIDE SEQUENCE [LARGE SCALE GENOMIC DNA]</scope>
</reference>
<accession>A8W3E3</accession>
<geneLocation type="plastid"/>